<gene>
    <name type="primary">RTT107</name>
    <name type="synonym">ESC4</name>
    <name type="ordered locus">YHR154W</name>
</gene>
<dbReference type="EMBL" id="U10397">
    <property type="protein sequence ID" value="AAB68978.1"/>
    <property type="molecule type" value="Genomic_DNA"/>
</dbReference>
<dbReference type="EMBL" id="BK006934">
    <property type="protein sequence ID" value="DAA06847.1"/>
    <property type="molecule type" value="Genomic_DNA"/>
</dbReference>
<dbReference type="PIR" id="S46755">
    <property type="entry name" value="S46755"/>
</dbReference>
<dbReference type="RefSeq" id="NP_012024.1">
    <property type="nucleotide sequence ID" value="NM_001179285.1"/>
</dbReference>
<dbReference type="PDB" id="3T7I">
    <property type="method" value="X-ray"/>
    <property type="resolution" value="2.30 A"/>
    <property type="chains" value="A/B=820-1070"/>
</dbReference>
<dbReference type="PDB" id="3T7J">
    <property type="method" value="X-ray"/>
    <property type="resolution" value="2.04 A"/>
    <property type="chains" value="A/B=820-1070"/>
</dbReference>
<dbReference type="PDB" id="3T7K">
    <property type="method" value="X-ray"/>
    <property type="resolution" value="2.03 A"/>
    <property type="chains" value="A/B=820-1070"/>
</dbReference>
<dbReference type="PDB" id="6J0V">
    <property type="method" value="X-ray"/>
    <property type="resolution" value="2.31 A"/>
    <property type="chains" value="A/B=1-513"/>
</dbReference>
<dbReference type="PDB" id="6J0W">
    <property type="method" value="X-ray"/>
    <property type="resolution" value="2.40 A"/>
    <property type="chains" value="A/B=1-513"/>
</dbReference>
<dbReference type="PDB" id="6J0X">
    <property type="method" value="X-ray"/>
    <property type="resolution" value="2.31 A"/>
    <property type="chains" value="A/B/C/D=1-513"/>
</dbReference>
<dbReference type="PDB" id="6J0Y">
    <property type="method" value="X-ray"/>
    <property type="resolution" value="1.80 A"/>
    <property type="chains" value="A/B=2-513"/>
</dbReference>
<dbReference type="PDBsum" id="3T7I"/>
<dbReference type="PDBsum" id="3T7J"/>
<dbReference type="PDBsum" id="3T7K"/>
<dbReference type="PDBsum" id="6J0V"/>
<dbReference type="PDBsum" id="6J0W"/>
<dbReference type="PDBsum" id="6J0X"/>
<dbReference type="PDBsum" id="6J0Y"/>
<dbReference type="SMR" id="P38850"/>
<dbReference type="BioGRID" id="36588">
    <property type="interactions" value="444"/>
</dbReference>
<dbReference type="ComplexPortal" id="CPX-1157">
    <property type="entry name" value="CUL8-MMS1-MMS22-ESC4 E3 ubiquitin ligase complex"/>
</dbReference>
<dbReference type="ComplexPortal" id="CPX-1355">
    <property type="entry name" value="RTT107-SLX4-SLX1 complex"/>
</dbReference>
<dbReference type="DIP" id="DIP-6297N"/>
<dbReference type="FunCoup" id="P38850">
    <property type="interactions" value="112"/>
</dbReference>
<dbReference type="IntAct" id="P38850">
    <property type="interactions" value="36"/>
</dbReference>
<dbReference type="MINT" id="P38850"/>
<dbReference type="STRING" id="4932.YHR154W"/>
<dbReference type="GlyGen" id="P38850">
    <property type="glycosylation" value="2 sites, 1 O-linked glycan (2 sites)"/>
</dbReference>
<dbReference type="iPTMnet" id="P38850"/>
<dbReference type="PaxDb" id="4932-YHR154W"/>
<dbReference type="PeptideAtlas" id="P38850"/>
<dbReference type="EnsemblFungi" id="YHR154W_mRNA">
    <property type="protein sequence ID" value="YHR154W"/>
    <property type="gene ID" value="YHR154W"/>
</dbReference>
<dbReference type="GeneID" id="856559"/>
<dbReference type="KEGG" id="sce:YHR154W"/>
<dbReference type="AGR" id="SGD:S000001197"/>
<dbReference type="SGD" id="S000001197">
    <property type="gene designation" value="RTT107"/>
</dbReference>
<dbReference type="VEuPathDB" id="FungiDB:YHR154W"/>
<dbReference type="eggNOG" id="KOG2043">
    <property type="taxonomic scope" value="Eukaryota"/>
</dbReference>
<dbReference type="HOGENOM" id="CLU_002149_0_0_1"/>
<dbReference type="InParanoid" id="P38850"/>
<dbReference type="OMA" id="QRFYIQR"/>
<dbReference type="OrthoDB" id="342264at2759"/>
<dbReference type="BioCyc" id="YEAST:G3O-31189-MONOMER"/>
<dbReference type="EvolutionaryTrace" id="P38850"/>
<dbReference type="PRO" id="PR:P38850"/>
<dbReference type="Proteomes" id="UP000002311">
    <property type="component" value="Chromosome VIII"/>
</dbReference>
<dbReference type="RNAct" id="P38850">
    <property type="molecule type" value="protein"/>
</dbReference>
<dbReference type="GO" id="GO:0071944">
    <property type="term" value="C:cell periphery"/>
    <property type="evidence" value="ECO:0007005"/>
    <property type="project" value="SGD"/>
</dbReference>
<dbReference type="GO" id="GO:0035361">
    <property type="term" value="C:Cul8-RING ubiquitin ligase complex"/>
    <property type="evidence" value="ECO:0000314"/>
    <property type="project" value="SGD"/>
</dbReference>
<dbReference type="GO" id="GO:0005634">
    <property type="term" value="C:nucleus"/>
    <property type="evidence" value="ECO:0007005"/>
    <property type="project" value="SGD"/>
</dbReference>
<dbReference type="GO" id="GO:0003682">
    <property type="term" value="F:chromatin binding"/>
    <property type="evidence" value="ECO:0000314"/>
    <property type="project" value="SGD"/>
</dbReference>
<dbReference type="GO" id="GO:1990683">
    <property type="term" value="P:DNA double-strand break attachment to nuclear envelope"/>
    <property type="evidence" value="ECO:0000315"/>
    <property type="project" value="SGD"/>
</dbReference>
<dbReference type="GO" id="GO:0006302">
    <property type="term" value="P:double-strand break repair"/>
    <property type="evidence" value="ECO:0000315"/>
    <property type="project" value="SGD"/>
</dbReference>
<dbReference type="GO" id="GO:0006334">
    <property type="term" value="P:nucleosome assembly"/>
    <property type="evidence" value="ECO:0000303"/>
    <property type="project" value="ComplexPortal"/>
</dbReference>
<dbReference type="GO" id="GO:2000001">
    <property type="term" value="P:regulation of DNA damage checkpoint"/>
    <property type="evidence" value="ECO:0000315"/>
    <property type="project" value="SGD"/>
</dbReference>
<dbReference type="GO" id="GO:1903775">
    <property type="term" value="P:regulation of DNA double-strand break processing"/>
    <property type="evidence" value="ECO:0000315"/>
    <property type="project" value="SGD"/>
</dbReference>
<dbReference type="GO" id="GO:0010526">
    <property type="term" value="P:transposable element silencing"/>
    <property type="evidence" value="ECO:0000315"/>
    <property type="project" value="SGD"/>
</dbReference>
<dbReference type="FunFam" id="3.40.50.10190:FF:000091">
    <property type="entry name" value="Regulator of Ty1 transposition"/>
    <property type="match status" value="1"/>
</dbReference>
<dbReference type="FunFam" id="3.40.50.10190:FF:000080">
    <property type="entry name" value="S-M checkpoint control protein rad4"/>
    <property type="match status" value="1"/>
</dbReference>
<dbReference type="Gene3D" id="3.40.50.10190">
    <property type="entry name" value="BRCT domain"/>
    <property type="match status" value="4"/>
</dbReference>
<dbReference type="IDEAL" id="IID50173"/>
<dbReference type="InterPro" id="IPR001357">
    <property type="entry name" value="BRCT_dom"/>
</dbReference>
<dbReference type="InterPro" id="IPR036420">
    <property type="entry name" value="BRCT_dom_sf"/>
</dbReference>
<dbReference type="InterPro" id="IPR053036">
    <property type="entry name" value="CellCycle_DNARepair_Reg"/>
</dbReference>
<dbReference type="InterPro" id="IPR031906">
    <property type="entry name" value="RTT107_BRCT_6"/>
</dbReference>
<dbReference type="PANTHER" id="PTHR47667">
    <property type="entry name" value="REGULATOR OF TY1 TRANSPOSITION PROTEIN 107"/>
    <property type="match status" value="1"/>
</dbReference>
<dbReference type="PANTHER" id="PTHR47667:SF1">
    <property type="entry name" value="REGULATOR OF TY1 TRANSPOSITION PROTEIN 107"/>
    <property type="match status" value="1"/>
</dbReference>
<dbReference type="Pfam" id="PF00533">
    <property type="entry name" value="BRCT"/>
    <property type="match status" value="1"/>
</dbReference>
<dbReference type="Pfam" id="PF12738">
    <property type="entry name" value="PTCB-BRCT"/>
    <property type="match status" value="1"/>
</dbReference>
<dbReference type="Pfam" id="PF16770">
    <property type="entry name" value="RTT107_BRCT_5"/>
    <property type="match status" value="1"/>
</dbReference>
<dbReference type="Pfam" id="PF16771">
    <property type="entry name" value="RTT107_BRCT_6"/>
    <property type="match status" value="1"/>
</dbReference>
<dbReference type="SMART" id="SM00292">
    <property type="entry name" value="BRCT"/>
    <property type="match status" value="4"/>
</dbReference>
<dbReference type="SUPFAM" id="SSF52113">
    <property type="entry name" value="BRCT domain"/>
    <property type="match status" value="2"/>
</dbReference>
<dbReference type="PROSITE" id="PS50172">
    <property type="entry name" value="BRCT"/>
    <property type="match status" value="2"/>
</dbReference>
<feature type="chain" id="PRO_0000097502" description="Regulator of Ty1 transposition protein 107">
    <location>
        <begin position="1"/>
        <end position="1070"/>
    </location>
</feature>
<feature type="domain" description="BRCT 1" evidence="1">
    <location>
        <begin position="2"/>
        <end position="103"/>
    </location>
</feature>
<feature type="domain" description="BRCT 2" evidence="1">
    <location>
        <begin position="117"/>
        <end position="213"/>
    </location>
</feature>
<feature type="domain" description="BRCT 3" evidence="1">
    <location>
        <begin position="260"/>
        <end position="352"/>
    </location>
</feature>
<feature type="domain" description="BRCT 4" evidence="1">
    <location>
        <begin position="369"/>
        <end position="453"/>
    </location>
</feature>
<feature type="domain" description="BRCT 5" evidence="1">
    <location>
        <begin position="829"/>
        <end position="910"/>
    </location>
</feature>
<feature type="domain" description="BRCT 6" evidence="1">
    <location>
        <begin position="934"/>
        <end position="1049"/>
    </location>
</feature>
<feature type="region of interest" description="Disordered" evidence="2">
    <location>
        <begin position="572"/>
        <end position="659"/>
    </location>
</feature>
<feature type="region of interest" description="Disordered" evidence="2">
    <location>
        <begin position="722"/>
        <end position="753"/>
    </location>
</feature>
<feature type="compositionally biased region" description="Basic and acidic residues" evidence="2">
    <location>
        <begin position="580"/>
        <end position="592"/>
    </location>
</feature>
<feature type="compositionally biased region" description="Basic and acidic residues" evidence="2">
    <location>
        <begin position="603"/>
        <end position="615"/>
    </location>
</feature>
<feature type="compositionally biased region" description="Basic and acidic residues" evidence="2">
    <location>
        <begin position="622"/>
        <end position="645"/>
    </location>
</feature>
<feature type="compositionally biased region" description="Basic and acidic residues" evidence="2">
    <location>
        <begin position="722"/>
        <end position="731"/>
    </location>
</feature>
<feature type="compositionally biased region" description="Polar residues" evidence="2">
    <location>
        <begin position="735"/>
        <end position="753"/>
    </location>
</feature>
<feature type="modified residue" description="Phosphoserine" evidence="11">
    <location>
        <position position="304"/>
    </location>
</feature>
<feature type="modified residue" description="Phosphothreonine" evidence="10 11 12">
    <location>
        <position position="532"/>
    </location>
</feature>
<feature type="modified residue" description="Phosphoserine" evidence="11">
    <location>
        <position position="591"/>
    </location>
</feature>
<feature type="modified residue" description="Phosphoserine" evidence="11">
    <location>
        <position position="593"/>
    </location>
</feature>
<feature type="modified residue" description="Phosphoserine" evidence="12">
    <location>
        <position position="720"/>
    </location>
</feature>
<feature type="modified residue" description="Phosphoserine" evidence="11">
    <location>
        <position position="800"/>
    </location>
</feature>
<feature type="modified residue" description="Phosphoserine" evidence="11 12">
    <location>
        <position position="806"/>
    </location>
</feature>
<feature type="turn" evidence="15">
    <location>
        <begin position="6"/>
        <end position="9"/>
    </location>
</feature>
<feature type="strand" evidence="16">
    <location>
        <begin position="11"/>
        <end position="16"/>
    </location>
</feature>
<feature type="helix" evidence="16">
    <location>
        <begin position="19"/>
        <end position="21"/>
    </location>
</feature>
<feature type="helix" evidence="16">
    <location>
        <begin position="22"/>
        <end position="34"/>
    </location>
</feature>
<feature type="strand" evidence="16">
    <location>
        <begin position="37"/>
        <end position="44"/>
    </location>
</feature>
<feature type="helix" evidence="16">
    <location>
        <begin position="45"/>
        <end position="47"/>
    </location>
</feature>
<feature type="helix" evidence="16">
    <location>
        <begin position="50"/>
        <end position="52"/>
    </location>
</feature>
<feature type="helix" evidence="16">
    <location>
        <begin position="57"/>
        <end position="64"/>
    </location>
</feature>
<feature type="strand" evidence="16">
    <location>
        <begin position="71"/>
        <end position="73"/>
    </location>
</feature>
<feature type="helix" evidence="16">
    <location>
        <begin position="82"/>
        <end position="86"/>
    </location>
</feature>
<feature type="helix" evidence="16">
    <location>
        <begin position="96"/>
        <end position="105"/>
    </location>
</feature>
<feature type="helix" evidence="16">
    <location>
        <begin position="112"/>
        <end position="114"/>
    </location>
</feature>
<feature type="turn" evidence="16">
    <location>
        <begin position="121"/>
        <end position="124"/>
    </location>
</feature>
<feature type="strand" evidence="16">
    <location>
        <begin position="126"/>
        <end position="129"/>
    </location>
</feature>
<feature type="turn" evidence="16">
    <location>
        <begin position="131"/>
        <end position="133"/>
    </location>
</feature>
<feature type="helix" evidence="16">
    <location>
        <begin position="136"/>
        <end position="148"/>
    </location>
</feature>
<feature type="strand" evidence="16">
    <location>
        <begin position="152"/>
        <end position="157"/>
    </location>
</feature>
<feature type="strand" evidence="16">
    <location>
        <begin position="163"/>
        <end position="165"/>
    </location>
</feature>
<feature type="helix" evidence="16">
    <location>
        <begin position="173"/>
        <end position="178"/>
    </location>
</feature>
<feature type="strand" evidence="16">
    <location>
        <begin position="196"/>
        <end position="199"/>
    </location>
</feature>
<feature type="strand" evidence="15">
    <location>
        <begin position="202"/>
        <end position="204"/>
    </location>
</feature>
<feature type="helix" evidence="16">
    <location>
        <begin position="207"/>
        <end position="215"/>
    </location>
</feature>
<feature type="helix" evidence="16">
    <location>
        <begin position="221"/>
        <end position="226"/>
    </location>
</feature>
<feature type="helix" evidence="16">
    <location>
        <begin position="236"/>
        <end position="247"/>
    </location>
</feature>
<feature type="helix" evidence="16">
    <location>
        <begin position="256"/>
        <end position="259"/>
    </location>
</feature>
<feature type="turn" evidence="16">
    <location>
        <begin position="263"/>
        <end position="268"/>
    </location>
</feature>
<feature type="strand" evidence="16">
    <location>
        <begin position="270"/>
        <end position="273"/>
    </location>
</feature>
<feature type="helix" evidence="16">
    <location>
        <begin position="281"/>
        <end position="293"/>
    </location>
</feature>
<feature type="strand" evidence="16">
    <location>
        <begin position="297"/>
        <end position="300"/>
    </location>
</feature>
<feature type="helix" evidence="16">
    <location>
        <begin position="307"/>
        <end position="313"/>
    </location>
</feature>
<feature type="strand" evidence="16">
    <location>
        <begin position="319"/>
        <end position="321"/>
    </location>
</feature>
<feature type="helix" evidence="16">
    <location>
        <begin position="328"/>
        <end position="336"/>
    </location>
</feature>
<feature type="strand" evidence="16">
    <location>
        <begin position="341"/>
        <end position="343"/>
    </location>
</feature>
<feature type="helix" evidence="16">
    <location>
        <begin position="345"/>
        <end position="354"/>
    </location>
</feature>
<feature type="helix" evidence="16">
    <location>
        <begin position="360"/>
        <end position="362"/>
    </location>
</feature>
<feature type="helix" evidence="16">
    <location>
        <begin position="365"/>
        <end position="367"/>
    </location>
</feature>
<feature type="turn" evidence="16">
    <location>
        <begin position="377"/>
        <end position="379"/>
    </location>
</feature>
<feature type="strand" evidence="16">
    <location>
        <begin position="381"/>
        <end position="386"/>
    </location>
</feature>
<feature type="helix" evidence="16">
    <location>
        <begin position="390"/>
        <end position="402"/>
    </location>
</feature>
<feature type="strand" evidence="16">
    <location>
        <begin position="405"/>
        <end position="410"/>
    </location>
</feature>
<feature type="strand" evidence="16">
    <location>
        <begin position="415"/>
        <end position="422"/>
    </location>
</feature>
<feature type="helix" evidence="16">
    <location>
        <begin position="425"/>
        <end position="434"/>
    </location>
</feature>
<feature type="turn" evidence="16">
    <location>
        <begin position="437"/>
        <end position="439"/>
    </location>
</feature>
<feature type="strand" evidence="16">
    <location>
        <begin position="442"/>
        <end position="444"/>
    </location>
</feature>
<feature type="helix" evidence="16">
    <location>
        <begin position="446"/>
        <end position="455"/>
    </location>
</feature>
<feature type="helix" evidence="16">
    <location>
        <begin position="464"/>
        <end position="466"/>
    </location>
</feature>
<feature type="helix" evidence="16">
    <location>
        <begin position="471"/>
        <end position="473"/>
    </location>
</feature>
<feature type="helix" evidence="16">
    <location>
        <begin position="475"/>
        <end position="477"/>
    </location>
</feature>
<feature type="helix" evidence="14">
    <location>
        <begin position="822"/>
        <end position="827"/>
    </location>
</feature>
<feature type="strand" evidence="14">
    <location>
        <begin position="837"/>
        <end position="844"/>
    </location>
</feature>
<feature type="helix" evidence="14">
    <location>
        <begin position="851"/>
        <end position="859"/>
    </location>
</feature>
<feature type="strand" evidence="14">
    <location>
        <begin position="862"/>
        <end position="864"/>
    </location>
</feature>
<feature type="helix" evidence="14">
    <location>
        <begin position="870"/>
        <end position="872"/>
    </location>
</feature>
<feature type="strand" evidence="14">
    <location>
        <begin position="876"/>
        <end position="878"/>
    </location>
</feature>
<feature type="helix" evidence="14">
    <location>
        <begin position="886"/>
        <end position="891"/>
    </location>
</feature>
<feature type="strand" evidence="14">
    <location>
        <begin position="899"/>
        <end position="901"/>
    </location>
</feature>
<feature type="helix" evidence="14">
    <location>
        <begin position="904"/>
        <end position="913"/>
    </location>
</feature>
<feature type="helix" evidence="13">
    <location>
        <begin position="927"/>
        <end position="930"/>
    </location>
</feature>
<feature type="helix" evidence="14">
    <location>
        <begin position="937"/>
        <end position="942"/>
    </location>
</feature>
<feature type="strand" evidence="14">
    <location>
        <begin position="945"/>
        <end position="947"/>
    </location>
</feature>
<feature type="helix" evidence="14">
    <location>
        <begin position="949"/>
        <end position="952"/>
    </location>
</feature>
<feature type="strand" evidence="14">
    <location>
        <begin position="957"/>
        <end position="961"/>
    </location>
</feature>
<feature type="helix" evidence="14">
    <location>
        <begin position="968"/>
        <end position="977"/>
    </location>
</feature>
<feature type="strand" evidence="14">
    <location>
        <begin position="982"/>
        <end position="986"/>
    </location>
</feature>
<feature type="turn" evidence="14">
    <location>
        <begin position="988"/>
        <end position="990"/>
    </location>
</feature>
<feature type="helix" evidence="14">
    <location>
        <begin position="993"/>
        <end position="995"/>
    </location>
</feature>
<feature type="strand" evidence="14">
    <location>
        <begin position="1011"/>
        <end position="1015"/>
    </location>
</feature>
<feature type="helix" evidence="14">
    <location>
        <begin position="1019"/>
        <end position="1032"/>
    </location>
</feature>
<feature type="strand" evidence="14">
    <location>
        <begin position="1038"/>
        <end position="1041"/>
    </location>
</feature>
<feature type="helix" evidence="14">
    <location>
        <begin position="1043"/>
        <end position="1051"/>
    </location>
</feature>
<feature type="strand" evidence="14">
    <location>
        <begin position="1063"/>
        <end position="1067"/>
    </location>
</feature>
<keyword id="KW-0002">3D-structure</keyword>
<keyword id="KW-0227">DNA damage</keyword>
<keyword id="KW-0234">DNA repair</keyword>
<keyword id="KW-0539">Nucleus</keyword>
<keyword id="KW-0597">Phosphoprotein</keyword>
<keyword id="KW-1185">Reference proteome</keyword>
<keyword id="KW-0677">Repeat</keyword>
<organism>
    <name type="scientific">Saccharomyces cerevisiae (strain ATCC 204508 / S288c)</name>
    <name type="common">Baker's yeast</name>
    <dbReference type="NCBI Taxonomy" id="559292"/>
    <lineage>
        <taxon>Eukaryota</taxon>
        <taxon>Fungi</taxon>
        <taxon>Dikarya</taxon>
        <taxon>Ascomycota</taxon>
        <taxon>Saccharomycotina</taxon>
        <taxon>Saccharomycetes</taxon>
        <taxon>Saccharomycetales</taxon>
        <taxon>Saccharomycetaceae</taxon>
        <taxon>Saccharomyces</taxon>
    </lineage>
</organism>
<evidence type="ECO:0000255" key="1">
    <source>
        <dbReference type="PROSITE-ProRule" id="PRU00033"/>
    </source>
</evidence>
<evidence type="ECO:0000256" key="2">
    <source>
        <dbReference type="SAM" id="MobiDB-lite"/>
    </source>
</evidence>
<evidence type="ECO:0000269" key="3">
    <source>
    </source>
</evidence>
<evidence type="ECO:0000269" key="4">
    <source>
    </source>
</evidence>
<evidence type="ECO:0000269" key="5">
    <source>
    </source>
</evidence>
<evidence type="ECO:0000269" key="6">
    <source>
    </source>
</evidence>
<evidence type="ECO:0000269" key="7">
    <source>
    </source>
</evidence>
<evidence type="ECO:0000269" key="8">
    <source>
    </source>
</evidence>
<evidence type="ECO:0000269" key="9">
    <source>
    </source>
</evidence>
<evidence type="ECO:0007744" key="10">
    <source>
    </source>
</evidence>
<evidence type="ECO:0007744" key="11">
    <source>
    </source>
</evidence>
<evidence type="ECO:0007744" key="12">
    <source>
    </source>
</evidence>
<evidence type="ECO:0007829" key="13">
    <source>
        <dbReference type="PDB" id="3T7I"/>
    </source>
</evidence>
<evidence type="ECO:0007829" key="14">
    <source>
        <dbReference type="PDB" id="3T7K"/>
    </source>
</evidence>
<evidence type="ECO:0007829" key="15">
    <source>
        <dbReference type="PDB" id="6J0X"/>
    </source>
</evidence>
<evidence type="ECO:0007829" key="16">
    <source>
        <dbReference type="PDB" id="6J0Y"/>
    </source>
</evidence>
<reference key="1">
    <citation type="journal article" date="1994" name="Science">
        <title>Complete nucleotide sequence of Saccharomyces cerevisiae chromosome VIII.</title>
        <authorList>
            <person name="Johnston M."/>
            <person name="Andrews S."/>
            <person name="Brinkman R."/>
            <person name="Cooper J."/>
            <person name="Ding H."/>
            <person name="Dover J."/>
            <person name="Du Z."/>
            <person name="Favello A."/>
            <person name="Fulton L."/>
            <person name="Gattung S."/>
            <person name="Geisel C."/>
            <person name="Kirsten J."/>
            <person name="Kucaba T."/>
            <person name="Hillier L.W."/>
            <person name="Jier M."/>
            <person name="Johnston L."/>
            <person name="Langston Y."/>
            <person name="Latreille P."/>
            <person name="Louis E.J."/>
            <person name="Macri C."/>
            <person name="Mardis E."/>
            <person name="Menezes S."/>
            <person name="Mouser L."/>
            <person name="Nhan M."/>
            <person name="Rifkin L."/>
            <person name="Riles L."/>
            <person name="St Peter H."/>
            <person name="Trevaskis E."/>
            <person name="Vaughan K."/>
            <person name="Vignati D."/>
            <person name="Wilcox L."/>
            <person name="Wohldman P."/>
            <person name="Waterston R."/>
            <person name="Wilson R."/>
            <person name="Vaudin M."/>
        </authorList>
    </citation>
    <scope>NUCLEOTIDE SEQUENCE [LARGE SCALE GENOMIC DNA]</scope>
    <source>
        <strain>ATCC 204508 / S288c</strain>
    </source>
</reference>
<reference key="2">
    <citation type="journal article" date="2014" name="G3 (Bethesda)">
        <title>The reference genome sequence of Saccharomyces cerevisiae: Then and now.</title>
        <authorList>
            <person name="Engel S.R."/>
            <person name="Dietrich F.S."/>
            <person name="Fisk D.G."/>
            <person name="Binkley G."/>
            <person name="Balakrishnan R."/>
            <person name="Costanzo M.C."/>
            <person name="Dwight S.S."/>
            <person name="Hitz B.C."/>
            <person name="Karra K."/>
            <person name="Nash R.S."/>
            <person name="Weng S."/>
            <person name="Wong E.D."/>
            <person name="Lloyd P."/>
            <person name="Skrzypek M.S."/>
            <person name="Miyasato S.R."/>
            <person name="Simison M."/>
            <person name="Cherry J.M."/>
        </authorList>
    </citation>
    <scope>GENOME REANNOTATION</scope>
    <source>
        <strain>ATCC 204508 / S288c</strain>
    </source>
</reference>
<reference key="3">
    <citation type="journal article" date="2003" name="Nature">
        <title>Global analysis of protein localization in budding yeast.</title>
        <authorList>
            <person name="Huh W.-K."/>
            <person name="Falvo J.V."/>
            <person name="Gerke L.C."/>
            <person name="Carroll A.S."/>
            <person name="Howson R.W."/>
            <person name="Weissman J.S."/>
            <person name="O'Shea E.K."/>
        </authorList>
    </citation>
    <scope>SUBCELLULAR LOCATION [LARGE SCALE ANALYSIS]</scope>
</reference>
<reference key="4">
    <citation type="journal article" date="2003" name="Nature">
        <title>Global analysis of protein expression in yeast.</title>
        <authorList>
            <person name="Ghaemmaghami S."/>
            <person name="Huh W.-K."/>
            <person name="Bower K."/>
            <person name="Howson R.W."/>
            <person name="Belle A."/>
            <person name="Dephoure N."/>
            <person name="O'Shea E.K."/>
            <person name="Weissman J.S."/>
        </authorList>
    </citation>
    <scope>LEVEL OF PROTEIN EXPRESSION [LARGE SCALE ANALYSIS]</scope>
</reference>
<reference key="5">
    <citation type="journal article" date="2004" name="EMBO J.">
        <title>Esc4p, a new target of Mec1p (ATR), promotes resumption of DNA synthesis after DNA damage.</title>
        <authorList>
            <person name="Rouse J."/>
        </authorList>
    </citation>
    <scope>FUNCTION</scope>
    <scope>PHOSPHORYLATION BY MEC1</scope>
</reference>
<reference key="6">
    <citation type="journal article" date="2006" name="DNA Repair">
        <title>Esc4/Rtt107 and the control of recombination during replication.</title>
        <authorList>
            <person name="Chin J.K."/>
            <person name="Bashkirov V.I."/>
            <person name="Heyer W.-D."/>
            <person name="Romesberg F.E."/>
        </authorList>
    </citation>
    <scope>INTERACTION WITH RAD55 AND MMS22</scope>
    <scope>SUBCELLULAR LOCATION</scope>
</reference>
<reference key="7">
    <citation type="journal article" date="2007" name="J. Proteome Res.">
        <title>Large-scale phosphorylation analysis of alpha-factor-arrested Saccharomyces cerevisiae.</title>
        <authorList>
            <person name="Li X."/>
            <person name="Gerber S.A."/>
            <person name="Rudner A.D."/>
            <person name="Beausoleil S.A."/>
            <person name="Haas W."/>
            <person name="Villen J."/>
            <person name="Elias J.E."/>
            <person name="Gygi S.P."/>
        </authorList>
    </citation>
    <scope>PHOSPHORYLATION [LARGE SCALE ANALYSIS] AT THR-532</scope>
    <scope>IDENTIFICATION BY MASS SPECTROMETRY [LARGE SCALE ANALYSIS]</scope>
    <source>
        <strain>ADR376</strain>
    </source>
</reference>
<reference key="8">
    <citation type="journal article" date="2008" name="Mol. Biol. Cell">
        <title>Regulation of rtt107 recruitment to stalled DNA replication forks by the cullin rtt101 and the rtt109 acetyltransferase.</title>
        <authorList>
            <person name="Roberts T.M."/>
            <person name="Zaidi I.W."/>
            <person name="Vaisica J.A."/>
            <person name="Peter M."/>
            <person name="Brown G.W."/>
        </authorList>
    </citation>
    <scope>FUNCTION</scope>
    <scope>INTERACTION WITH RTT101</scope>
</reference>
<reference key="9">
    <citation type="journal article" date="2008" name="Mol. Cell. Proteomics">
        <title>A multidimensional chromatography technology for in-depth phosphoproteome analysis.</title>
        <authorList>
            <person name="Albuquerque C.P."/>
            <person name="Smolka M.B."/>
            <person name="Payne S.H."/>
            <person name="Bafna V."/>
            <person name="Eng J."/>
            <person name="Zhou H."/>
        </authorList>
    </citation>
    <scope>PHOSPHORYLATION [LARGE SCALE ANALYSIS] AT SER-304; THR-532; SER-591; SER-593; SER-800 AND SER-806</scope>
    <scope>IDENTIFICATION BY MASS SPECTROMETRY [LARGE SCALE ANALYSIS]</scope>
</reference>
<reference key="10">
    <citation type="journal article" date="2009" name="Science">
        <title>Global analysis of Cdk1 substrate phosphorylation sites provides insights into evolution.</title>
        <authorList>
            <person name="Holt L.J."/>
            <person name="Tuch B.B."/>
            <person name="Villen J."/>
            <person name="Johnson A.D."/>
            <person name="Gygi S.P."/>
            <person name="Morgan D.O."/>
        </authorList>
    </citation>
    <scope>PHOSPHORYLATION [LARGE SCALE ANALYSIS] AT THR-532; SER-720 AND SER-806</scope>
    <scope>IDENTIFICATION BY MASS SPECTROMETRY [LARGE SCALE ANALYSIS]</scope>
</reference>
<reference key="11">
    <citation type="journal article" date="2010" name="J. Biol. Chem.">
        <title>Cul8/Rtt101 forms a variety of protein complexes that regulate DNA damage response and transcriptional silencing.</title>
        <authorList>
            <person name="Mimura S."/>
            <person name="Yamaguchi T."/>
            <person name="Ishii S."/>
            <person name="Noro E."/>
            <person name="Katsura T."/>
            <person name="Obuse C."/>
            <person name="Kamura T."/>
        </authorList>
    </citation>
    <scope>INTERACTION WITH MMS22</scope>
    <scope>IDENTIFICATION IN A COMPLEX WITH RTT101 AND MMS1</scope>
</reference>
<reference key="12">
    <citation type="journal article" date="2012" name="J. Biol. Chem.">
        <title>Structure of C-terminal tandem BRCT repeats of Rtt107 protein reveals critical role in interaction with phosphorylated histone H2A during DNA damage repair.</title>
        <authorList>
            <person name="Li X."/>
            <person name="Liu K."/>
            <person name="Li F."/>
            <person name="Wang J."/>
            <person name="Huang H."/>
            <person name="Wu J."/>
            <person name="Shi Y."/>
        </authorList>
    </citation>
    <scope>X-RAY CRYSTALLOGRAPHY (2.03 ANGSTROMS) OF 820-1070 IN COMPLEX WITH HTA1</scope>
</reference>
<name>RT107_YEAST</name>
<proteinExistence type="evidence at protein level"/>
<sequence>MSTSLLFEQLNFLILVAAEAELPIAHSTRKLLMDNSCNNCQIYELYNENLKDVKTDKDWFMNKFGPQTVHFVISNTINFPFYKIVYFDLLIPVVSHTWVQDSVKTKRHLRTNMYSPNPFHLLRDCQVYISKSSFNKCEYILYSDLLHLLGGTLVNYISNRTTHVIVQSPQDPIIATVSKLTFGSFSSSSTNKHTEKPLREWKFVYPIWILYHFKMAKPLKGELATLCELDMQDTSEEQLFAKWEEVIGDKQTSSSQLTLHPNKTLFKNHHFAISPDLNFFTPLYWFLKGFIEDLDGKVTPLSFSDDLKSVYQAFPDIDCYIGHSANSPILEKTKSIKPEIHVGNVSWLFYMFALQKFTPVSQCKLIHQPFHAKLFTSKELTVAYTNYFGSQRFYIQRLVEILGGLSTPELTRKNTHLITKSTIGKKFKVAKKWSLDPQNAIIVTNHMWLEQCYMNNSKLNPKDSRFQNFKLDDNMGWNIGQIGMDHSSLPTPKNLSMVTYDTQSISEKPPPTNDQMDQINDNTNVLSKKDGTPISSFENSIDEKIDKLQKISGEVAVTHSGDLERSFVSRPSRASFPVVDSKKSNLQKKDSNSDISMETEVFCEGHEKREEKEFTKPITEYDAPKKQEIREQSRKKNDIDYKKEEEETELQVQLGQRTKREIKTSKKNEKEKETNECHIEVDQMTNEKQGEESTGKLISTEDVTSKKDTDKFSHLFEGLSDNDDHINDEKPAVNSKYTTPKTSQNITSGVDTPTTAQTQVFMPSSGNSRLAKTQAAKRLHTDIESLNEFQKNFKRKRIDSEEISLSQDVERSNNNKELATKAEKILARFNELPNYDLKAVCTGCFHDGFNEVDIEILNQLGIKIFDNIKETDKLNCIFAPKILRTEKFLKSLSFEPLKFALKPEFIIDLLKQIHSKKDKLSQININLFDYEINGINESIISKTKLPTKVFERANIRCINLVNDIPGGVDTIGSVLKAHGIEKINVLRSKKCTFEDIIPNDVSKQENGGIFKYVLIVTKASQVKKFTKLINDRDKNETILIVEWNWCVESIFHLNVDFTSKKNVLYQKKNN</sequence>
<accession>P38850</accession>
<accession>D3DLA3</accession>
<comment type="function">
    <text evidence="5 7">Required for resumption of chromosome replication after DNA damage, specifically in S phase. Is recruited to chromatin in the presence of RTT109 and RTT101 in response to stalled replication forks and acts as a scaffold during DNA repair.</text>
</comment>
<comment type="subunit">
    <text evidence="6 7 8 9">Forms a complex with the cullin-RING ligase (CRL) RTT101(MMS1-MMS22). Interacts with MMS22 and RTT101. Interacts with histone H2A; requires H2A to be phosphorylated (gamma-H2A). Interacts with RAD55.</text>
</comment>
<comment type="interaction">
    <interactant intactId="EBI-24788">
        <id>P38850</id>
    </interactant>
    <interactant intactId="EBI-31156">
        <id>Q06164</id>
        <label>MMS22</label>
    </interactant>
    <organismsDiffer>false</organismsDiffer>
    <experiments>9</experiments>
</comment>
<comment type="interaction">
    <interactant intactId="EBI-24788">
        <id>P38850</id>
    </interactant>
    <interactant intactId="EBI-25861">
        <id>P47050</id>
        <label>RTT101</label>
    </interactant>
    <organismsDiffer>false</organismsDiffer>
    <experiments>5</experiments>
</comment>
<comment type="interaction">
    <interactant intactId="EBI-24788">
        <id>P38850</id>
    </interactant>
    <interactant intactId="EBI-37788">
        <id>Q12098</id>
        <label>SLX4</label>
    </interactant>
    <organismsDiffer>false</organismsDiffer>
    <experiments>7</experiments>
</comment>
<comment type="subcellular location">
    <subcellularLocation>
        <location evidence="3 6">Nucleus</location>
    </subcellularLocation>
    <text>Recruited to chromatin in response to replication fork stalling.</text>
</comment>
<comment type="PTM">
    <text evidence="5">Phosphorylated by MEC1.</text>
</comment>
<comment type="miscellaneous">
    <text evidence="4">Present with 1380 molecules/cell in log phase SD medium.</text>
</comment>
<protein>
    <recommendedName>
        <fullName>Regulator of Ty1 transposition protein 107</fullName>
    </recommendedName>
    <alternativeName>
        <fullName>Establishes silent chromatin protein 4</fullName>
    </alternativeName>
</protein>